<evidence type="ECO:0000255" key="1">
    <source>
        <dbReference type="HAMAP-Rule" id="MF_00104"/>
    </source>
</evidence>
<protein>
    <recommendedName>
        <fullName evidence="1">Ribonuclease 3</fullName>
        <ecNumber evidence="1">3.1.26.3</ecNumber>
    </recommendedName>
    <alternativeName>
        <fullName evidence="1">Ribonuclease III</fullName>
        <shortName evidence="1">RNase III</shortName>
    </alternativeName>
</protein>
<reference key="1">
    <citation type="journal article" date="2009" name="Infect. Immun.">
        <title>Comparative genomics reveal extensive transposon-mediated genomic plasticity and diversity among potential effector proteins within the genus Coxiella.</title>
        <authorList>
            <person name="Beare P.A."/>
            <person name="Unsworth N."/>
            <person name="Andoh M."/>
            <person name="Voth D.E."/>
            <person name="Omsland A."/>
            <person name="Gilk S.D."/>
            <person name="Williams K.P."/>
            <person name="Sobral B.W."/>
            <person name="Kupko J.J. III"/>
            <person name="Porcella S.F."/>
            <person name="Samuel J.E."/>
            <person name="Heinzen R.A."/>
        </authorList>
    </citation>
    <scope>NUCLEOTIDE SEQUENCE [LARGE SCALE GENOMIC DNA]</scope>
    <source>
        <strain>CbuG_Q212</strain>
    </source>
</reference>
<feature type="chain" id="PRO_1000094104" description="Ribonuclease 3">
    <location>
        <begin position="1"/>
        <end position="233"/>
    </location>
</feature>
<feature type="domain" description="RNase III" evidence="1">
    <location>
        <begin position="4"/>
        <end position="126"/>
    </location>
</feature>
<feature type="domain" description="DRBM" evidence="1">
    <location>
        <begin position="153"/>
        <end position="222"/>
    </location>
</feature>
<feature type="active site" evidence="1">
    <location>
        <position position="43"/>
    </location>
</feature>
<feature type="active site" evidence="1">
    <location>
        <position position="115"/>
    </location>
</feature>
<feature type="binding site" evidence="1">
    <location>
        <position position="39"/>
    </location>
    <ligand>
        <name>Mg(2+)</name>
        <dbReference type="ChEBI" id="CHEBI:18420"/>
    </ligand>
</feature>
<feature type="binding site" evidence="1">
    <location>
        <position position="112"/>
    </location>
    <ligand>
        <name>Mg(2+)</name>
        <dbReference type="ChEBI" id="CHEBI:18420"/>
    </ligand>
</feature>
<feature type="binding site" evidence="1">
    <location>
        <position position="115"/>
    </location>
    <ligand>
        <name>Mg(2+)</name>
        <dbReference type="ChEBI" id="CHEBI:18420"/>
    </ligand>
</feature>
<gene>
    <name evidence="1" type="primary">rnc</name>
    <name type="ordered locus">CbuG_0506</name>
</gene>
<organism>
    <name type="scientific">Coxiella burnetii (strain CbuG_Q212)</name>
    <name type="common">Coxiella burnetii (strain Q212)</name>
    <dbReference type="NCBI Taxonomy" id="434923"/>
    <lineage>
        <taxon>Bacteria</taxon>
        <taxon>Pseudomonadati</taxon>
        <taxon>Pseudomonadota</taxon>
        <taxon>Gammaproteobacteria</taxon>
        <taxon>Legionellales</taxon>
        <taxon>Coxiellaceae</taxon>
        <taxon>Coxiella</taxon>
    </lineage>
</organism>
<dbReference type="EC" id="3.1.26.3" evidence="1"/>
<dbReference type="EMBL" id="CP001019">
    <property type="protein sequence ID" value="ACJ17927.1"/>
    <property type="molecule type" value="Genomic_DNA"/>
</dbReference>
<dbReference type="RefSeq" id="WP_012569798.1">
    <property type="nucleotide sequence ID" value="NC_011527.1"/>
</dbReference>
<dbReference type="SMR" id="B6IYZ9"/>
<dbReference type="KEGG" id="cbg:CbuG_0506"/>
<dbReference type="HOGENOM" id="CLU_000907_1_1_6"/>
<dbReference type="GO" id="GO:0005737">
    <property type="term" value="C:cytoplasm"/>
    <property type="evidence" value="ECO:0007669"/>
    <property type="project" value="UniProtKB-SubCell"/>
</dbReference>
<dbReference type="GO" id="GO:0003725">
    <property type="term" value="F:double-stranded RNA binding"/>
    <property type="evidence" value="ECO:0007669"/>
    <property type="project" value="TreeGrafter"/>
</dbReference>
<dbReference type="GO" id="GO:0046872">
    <property type="term" value="F:metal ion binding"/>
    <property type="evidence" value="ECO:0007669"/>
    <property type="project" value="UniProtKB-KW"/>
</dbReference>
<dbReference type="GO" id="GO:0004525">
    <property type="term" value="F:ribonuclease III activity"/>
    <property type="evidence" value="ECO:0007669"/>
    <property type="project" value="UniProtKB-UniRule"/>
</dbReference>
<dbReference type="GO" id="GO:0019843">
    <property type="term" value="F:rRNA binding"/>
    <property type="evidence" value="ECO:0007669"/>
    <property type="project" value="UniProtKB-KW"/>
</dbReference>
<dbReference type="GO" id="GO:0006397">
    <property type="term" value="P:mRNA processing"/>
    <property type="evidence" value="ECO:0007669"/>
    <property type="project" value="UniProtKB-UniRule"/>
</dbReference>
<dbReference type="GO" id="GO:0010468">
    <property type="term" value="P:regulation of gene expression"/>
    <property type="evidence" value="ECO:0007669"/>
    <property type="project" value="TreeGrafter"/>
</dbReference>
<dbReference type="GO" id="GO:0006364">
    <property type="term" value="P:rRNA processing"/>
    <property type="evidence" value="ECO:0007669"/>
    <property type="project" value="UniProtKB-UniRule"/>
</dbReference>
<dbReference type="GO" id="GO:0008033">
    <property type="term" value="P:tRNA processing"/>
    <property type="evidence" value="ECO:0007669"/>
    <property type="project" value="UniProtKB-KW"/>
</dbReference>
<dbReference type="CDD" id="cd10845">
    <property type="entry name" value="DSRM_RNAse_III_family"/>
    <property type="match status" value="1"/>
</dbReference>
<dbReference type="CDD" id="cd00593">
    <property type="entry name" value="RIBOc"/>
    <property type="match status" value="1"/>
</dbReference>
<dbReference type="FunFam" id="1.10.1520.10:FF:000001">
    <property type="entry name" value="Ribonuclease 3"/>
    <property type="match status" value="1"/>
</dbReference>
<dbReference type="FunFam" id="3.30.160.20:FF:000003">
    <property type="entry name" value="Ribonuclease 3"/>
    <property type="match status" value="1"/>
</dbReference>
<dbReference type="Gene3D" id="3.30.160.20">
    <property type="match status" value="1"/>
</dbReference>
<dbReference type="Gene3D" id="1.10.1520.10">
    <property type="entry name" value="Ribonuclease III domain"/>
    <property type="match status" value="1"/>
</dbReference>
<dbReference type="HAMAP" id="MF_00104">
    <property type="entry name" value="RNase_III"/>
    <property type="match status" value="1"/>
</dbReference>
<dbReference type="InterPro" id="IPR014720">
    <property type="entry name" value="dsRBD_dom"/>
</dbReference>
<dbReference type="InterPro" id="IPR011907">
    <property type="entry name" value="RNase_III"/>
</dbReference>
<dbReference type="InterPro" id="IPR000999">
    <property type="entry name" value="RNase_III_dom"/>
</dbReference>
<dbReference type="InterPro" id="IPR036389">
    <property type="entry name" value="RNase_III_sf"/>
</dbReference>
<dbReference type="NCBIfam" id="TIGR02191">
    <property type="entry name" value="RNaseIII"/>
    <property type="match status" value="1"/>
</dbReference>
<dbReference type="PANTHER" id="PTHR11207:SF0">
    <property type="entry name" value="RIBONUCLEASE 3"/>
    <property type="match status" value="1"/>
</dbReference>
<dbReference type="PANTHER" id="PTHR11207">
    <property type="entry name" value="RIBONUCLEASE III"/>
    <property type="match status" value="1"/>
</dbReference>
<dbReference type="Pfam" id="PF00035">
    <property type="entry name" value="dsrm"/>
    <property type="match status" value="1"/>
</dbReference>
<dbReference type="Pfam" id="PF14622">
    <property type="entry name" value="Ribonucleas_3_3"/>
    <property type="match status" value="1"/>
</dbReference>
<dbReference type="SMART" id="SM00358">
    <property type="entry name" value="DSRM"/>
    <property type="match status" value="1"/>
</dbReference>
<dbReference type="SMART" id="SM00535">
    <property type="entry name" value="RIBOc"/>
    <property type="match status" value="1"/>
</dbReference>
<dbReference type="SUPFAM" id="SSF54768">
    <property type="entry name" value="dsRNA-binding domain-like"/>
    <property type="match status" value="1"/>
</dbReference>
<dbReference type="SUPFAM" id="SSF69065">
    <property type="entry name" value="RNase III domain-like"/>
    <property type="match status" value="1"/>
</dbReference>
<dbReference type="PROSITE" id="PS50137">
    <property type="entry name" value="DS_RBD"/>
    <property type="match status" value="1"/>
</dbReference>
<dbReference type="PROSITE" id="PS00517">
    <property type="entry name" value="RNASE_3_1"/>
    <property type="match status" value="1"/>
</dbReference>
<dbReference type="PROSITE" id="PS50142">
    <property type="entry name" value="RNASE_3_2"/>
    <property type="match status" value="1"/>
</dbReference>
<keyword id="KW-0963">Cytoplasm</keyword>
<keyword id="KW-0255">Endonuclease</keyword>
<keyword id="KW-0378">Hydrolase</keyword>
<keyword id="KW-0460">Magnesium</keyword>
<keyword id="KW-0479">Metal-binding</keyword>
<keyword id="KW-0507">mRNA processing</keyword>
<keyword id="KW-0540">Nuclease</keyword>
<keyword id="KW-0694">RNA-binding</keyword>
<keyword id="KW-0698">rRNA processing</keyword>
<keyword id="KW-0699">rRNA-binding</keyword>
<keyword id="KW-0819">tRNA processing</keyword>
<proteinExistence type="inferred from homology"/>
<name>RNC_COXB2</name>
<sequence length="233" mass="26268">MNHLNKLMERLGHQFNNLELLKIALTHRSSGADNNERLEFLGDSVLGFIIASELYQRRPQAREGDLSRMRASMVNGDELAQMSTKLGINEYLQLGVGEQKSGGKRRRSILADALEAIVGSIYIDAGLETCRRCVLNWYGERVDDLSKLSPKKDAKSLLQEWLQARRLPLPTYEVKITGEAHAQTFTVNCYVKGLPHKTEGVNTTRRRAEQIAAKRFLELLDDGKGDGITERDQ</sequence>
<comment type="function">
    <text evidence="1">Digests double-stranded RNA. Involved in the processing of primary rRNA transcript to yield the immediate precursors to the large and small rRNAs (23S and 16S). Processes some mRNAs, and tRNAs when they are encoded in the rRNA operon. Processes pre-crRNA and tracrRNA of type II CRISPR loci if present in the organism.</text>
</comment>
<comment type="catalytic activity">
    <reaction evidence="1">
        <text>Endonucleolytic cleavage to 5'-phosphomonoester.</text>
        <dbReference type="EC" id="3.1.26.3"/>
    </reaction>
</comment>
<comment type="cofactor">
    <cofactor evidence="1">
        <name>Mg(2+)</name>
        <dbReference type="ChEBI" id="CHEBI:18420"/>
    </cofactor>
</comment>
<comment type="subunit">
    <text evidence="1">Homodimer.</text>
</comment>
<comment type="subcellular location">
    <subcellularLocation>
        <location evidence="1">Cytoplasm</location>
    </subcellularLocation>
</comment>
<comment type="similarity">
    <text evidence="1">Belongs to the ribonuclease III family.</text>
</comment>
<accession>B6IYZ9</accession>